<evidence type="ECO:0000255" key="1">
    <source>
        <dbReference type="HAMAP-Rule" id="MF_00443"/>
    </source>
</evidence>
<organism>
    <name type="scientific">Acetivibrio thermocellus (strain ATCC 27405 / DSM 1237 / JCM 9322 / NBRC 103400 / NCIMB 10682 / NRRL B-4536 / VPI 7372)</name>
    <name type="common">Clostridium thermocellum</name>
    <dbReference type="NCBI Taxonomy" id="203119"/>
    <lineage>
        <taxon>Bacteria</taxon>
        <taxon>Bacillati</taxon>
        <taxon>Bacillota</taxon>
        <taxon>Clostridia</taxon>
        <taxon>Eubacteriales</taxon>
        <taxon>Oscillospiraceae</taxon>
        <taxon>Acetivibrio</taxon>
    </lineage>
</organism>
<feature type="chain" id="PRO_1000026003" description="Thiazole synthase">
    <location>
        <begin position="1"/>
        <end position="255"/>
    </location>
</feature>
<feature type="active site" description="Schiff-base intermediate with DXP" evidence="1">
    <location>
        <position position="97"/>
    </location>
</feature>
<feature type="binding site" evidence="1">
    <location>
        <position position="158"/>
    </location>
    <ligand>
        <name>1-deoxy-D-xylulose 5-phosphate</name>
        <dbReference type="ChEBI" id="CHEBI:57792"/>
    </ligand>
</feature>
<feature type="binding site" evidence="1">
    <location>
        <begin position="184"/>
        <end position="185"/>
    </location>
    <ligand>
        <name>1-deoxy-D-xylulose 5-phosphate</name>
        <dbReference type="ChEBI" id="CHEBI:57792"/>
    </ligand>
</feature>
<feature type="binding site" evidence="1">
    <location>
        <begin position="206"/>
        <end position="207"/>
    </location>
    <ligand>
        <name>1-deoxy-D-xylulose 5-phosphate</name>
        <dbReference type="ChEBI" id="CHEBI:57792"/>
    </ligand>
</feature>
<reference key="1">
    <citation type="submission" date="2007-02" db="EMBL/GenBank/DDBJ databases">
        <title>Complete sequence of Clostridium thermocellum ATCC 27405.</title>
        <authorList>
            <consortium name="US DOE Joint Genome Institute"/>
            <person name="Copeland A."/>
            <person name="Lucas S."/>
            <person name="Lapidus A."/>
            <person name="Barry K."/>
            <person name="Detter J.C."/>
            <person name="Glavina del Rio T."/>
            <person name="Hammon N."/>
            <person name="Israni S."/>
            <person name="Dalin E."/>
            <person name="Tice H."/>
            <person name="Pitluck S."/>
            <person name="Chertkov O."/>
            <person name="Brettin T."/>
            <person name="Bruce D."/>
            <person name="Han C."/>
            <person name="Tapia R."/>
            <person name="Gilna P."/>
            <person name="Schmutz J."/>
            <person name="Larimer F."/>
            <person name="Land M."/>
            <person name="Hauser L."/>
            <person name="Kyrpides N."/>
            <person name="Mikhailova N."/>
            <person name="Wu J.H.D."/>
            <person name="Newcomb M."/>
            <person name="Richardson P."/>
        </authorList>
    </citation>
    <scope>NUCLEOTIDE SEQUENCE [LARGE SCALE GENOMIC DNA]</scope>
    <source>
        <strain>ATCC 27405 / DSM 1237 / JCM 9322 / NBRC 103400 / NCIMB 10682 / NRRL B-4536 / VPI 7372</strain>
    </source>
</reference>
<proteinExistence type="inferred from homology"/>
<accession>A3DD04</accession>
<dbReference type="EC" id="2.8.1.10" evidence="1"/>
<dbReference type="EMBL" id="CP000568">
    <property type="protein sequence ID" value="ABN51833.1"/>
    <property type="molecule type" value="Genomic_DNA"/>
</dbReference>
<dbReference type="RefSeq" id="WP_003516495.1">
    <property type="nucleotide sequence ID" value="NC_009012.1"/>
</dbReference>
<dbReference type="SMR" id="A3DD04"/>
<dbReference type="STRING" id="203119.Cthe_0598"/>
<dbReference type="GeneID" id="35803384"/>
<dbReference type="KEGG" id="cth:Cthe_0598"/>
<dbReference type="eggNOG" id="COG2022">
    <property type="taxonomic scope" value="Bacteria"/>
</dbReference>
<dbReference type="HOGENOM" id="CLU_062233_1_0_9"/>
<dbReference type="OrthoDB" id="9805935at2"/>
<dbReference type="UniPathway" id="UPA00060"/>
<dbReference type="Proteomes" id="UP000002145">
    <property type="component" value="Chromosome"/>
</dbReference>
<dbReference type="GO" id="GO:0005737">
    <property type="term" value="C:cytoplasm"/>
    <property type="evidence" value="ECO:0007669"/>
    <property type="project" value="UniProtKB-SubCell"/>
</dbReference>
<dbReference type="GO" id="GO:1990107">
    <property type="term" value="F:thiazole synthase activity"/>
    <property type="evidence" value="ECO:0007669"/>
    <property type="project" value="UniProtKB-EC"/>
</dbReference>
<dbReference type="GO" id="GO:0009229">
    <property type="term" value="P:thiamine diphosphate biosynthetic process"/>
    <property type="evidence" value="ECO:0007669"/>
    <property type="project" value="UniProtKB-UniRule"/>
</dbReference>
<dbReference type="CDD" id="cd04728">
    <property type="entry name" value="ThiG"/>
    <property type="match status" value="1"/>
</dbReference>
<dbReference type="Gene3D" id="3.20.20.70">
    <property type="entry name" value="Aldolase class I"/>
    <property type="match status" value="1"/>
</dbReference>
<dbReference type="HAMAP" id="MF_00443">
    <property type="entry name" value="ThiG"/>
    <property type="match status" value="1"/>
</dbReference>
<dbReference type="InterPro" id="IPR013785">
    <property type="entry name" value="Aldolase_TIM"/>
</dbReference>
<dbReference type="InterPro" id="IPR033983">
    <property type="entry name" value="Thiazole_synthase_ThiG"/>
</dbReference>
<dbReference type="InterPro" id="IPR008867">
    <property type="entry name" value="ThiG"/>
</dbReference>
<dbReference type="PANTHER" id="PTHR34266">
    <property type="entry name" value="THIAZOLE SYNTHASE"/>
    <property type="match status" value="1"/>
</dbReference>
<dbReference type="PANTHER" id="PTHR34266:SF2">
    <property type="entry name" value="THIAZOLE SYNTHASE"/>
    <property type="match status" value="1"/>
</dbReference>
<dbReference type="Pfam" id="PF05690">
    <property type="entry name" value="ThiG"/>
    <property type="match status" value="1"/>
</dbReference>
<dbReference type="SUPFAM" id="SSF110399">
    <property type="entry name" value="ThiG-like"/>
    <property type="match status" value="1"/>
</dbReference>
<sequence length="255" mass="27371">MDDKLIIGGREIISRLFIGTGKFPANRIIPDVVRMSGAQVVTVALRRIDFDSDEENMLRYIPKDCILMPNTSGARNAEEAVRIARLARASGCGNFIKIEVISDNRYLLPDNLETIKATEILVKEGFIVLPYMNPDLMDARRLKDAGAAAVMPLGAPIGTNKGLKTREMIKILIDEIDIPVIVDAGIGKPSDACEAMELGADAVLVNTAIATAGDPVVMAEAFANAVIAGRKAYLSGLGPVKEYAEASSPLTGFLR</sequence>
<keyword id="KW-0963">Cytoplasm</keyword>
<keyword id="KW-1185">Reference proteome</keyword>
<keyword id="KW-0704">Schiff base</keyword>
<keyword id="KW-0784">Thiamine biosynthesis</keyword>
<keyword id="KW-0808">Transferase</keyword>
<name>THIG_ACET2</name>
<protein>
    <recommendedName>
        <fullName evidence="1">Thiazole synthase</fullName>
        <ecNumber evidence="1">2.8.1.10</ecNumber>
    </recommendedName>
</protein>
<gene>
    <name evidence="1" type="primary">thiG</name>
    <name type="ordered locus">Cthe_0598</name>
</gene>
<comment type="function">
    <text evidence="1">Catalyzes the rearrangement of 1-deoxy-D-xylulose 5-phosphate (DXP) to produce the thiazole phosphate moiety of thiamine. Sulfur is provided by the thiocarboxylate moiety of the carrier protein ThiS. In vitro, sulfur can be provided by H(2)S.</text>
</comment>
<comment type="catalytic activity">
    <reaction evidence="1">
        <text>[ThiS sulfur-carrier protein]-C-terminal-Gly-aminoethanethioate + 2-iminoacetate + 1-deoxy-D-xylulose 5-phosphate = [ThiS sulfur-carrier protein]-C-terminal Gly-Gly + 2-[(2R,5Z)-2-carboxy-4-methylthiazol-5(2H)-ylidene]ethyl phosphate + 2 H2O + H(+)</text>
        <dbReference type="Rhea" id="RHEA:26297"/>
        <dbReference type="Rhea" id="RHEA-COMP:12909"/>
        <dbReference type="Rhea" id="RHEA-COMP:19908"/>
        <dbReference type="ChEBI" id="CHEBI:15377"/>
        <dbReference type="ChEBI" id="CHEBI:15378"/>
        <dbReference type="ChEBI" id="CHEBI:57792"/>
        <dbReference type="ChEBI" id="CHEBI:62899"/>
        <dbReference type="ChEBI" id="CHEBI:77846"/>
        <dbReference type="ChEBI" id="CHEBI:90778"/>
        <dbReference type="ChEBI" id="CHEBI:232372"/>
        <dbReference type="EC" id="2.8.1.10"/>
    </reaction>
</comment>
<comment type="pathway">
    <text evidence="1">Cofactor biosynthesis; thiamine diphosphate biosynthesis.</text>
</comment>
<comment type="subunit">
    <text evidence="1">Homotetramer. Forms heterodimers with either ThiH or ThiS.</text>
</comment>
<comment type="subcellular location">
    <subcellularLocation>
        <location evidence="1">Cytoplasm</location>
    </subcellularLocation>
</comment>
<comment type="similarity">
    <text evidence="1">Belongs to the ThiG family.</text>
</comment>